<organism>
    <name type="scientific">Mus musculus</name>
    <name type="common">Mouse</name>
    <dbReference type="NCBI Taxonomy" id="10090"/>
    <lineage>
        <taxon>Eukaryota</taxon>
        <taxon>Metazoa</taxon>
        <taxon>Chordata</taxon>
        <taxon>Craniata</taxon>
        <taxon>Vertebrata</taxon>
        <taxon>Euteleostomi</taxon>
        <taxon>Mammalia</taxon>
        <taxon>Eutheria</taxon>
        <taxon>Euarchontoglires</taxon>
        <taxon>Glires</taxon>
        <taxon>Rodentia</taxon>
        <taxon>Myomorpha</taxon>
        <taxon>Muroidea</taxon>
        <taxon>Muridae</taxon>
        <taxon>Murinae</taxon>
        <taxon>Mus</taxon>
        <taxon>Mus</taxon>
    </lineage>
</organism>
<accession>Q8JZR6</accession>
<accession>Q3TAV7</accession>
<accession>Q6A004</accession>
<accession>Q8BYI7</accession>
<accession>Q9JKV6</accession>
<protein>
    <recommendedName>
        <fullName>Electroneutral sodium bicarbonate exchanger 1</fullName>
    </recommendedName>
    <alternativeName>
        <fullName>Electroneutral Na+-driven Cl-HCO3 exchanger</fullName>
    </alternativeName>
    <alternativeName>
        <fullName>Solute carrier family 4 member 8</fullName>
    </alternativeName>
    <alternativeName>
        <fullName>k-NBC3</fullName>
    </alternativeName>
</protein>
<dbReference type="EMBL" id="AF224508">
    <property type="protein sequence ID" value="AAF61705.1"/>
    <property type="molecule type" value="mRNA"/>
</dbReference>
<dbReference type="EMBL" id="AK039404">
    <property type="protein sequence ID" value="BAC30341.1"/>
    <property type="molecule type" value="mRNA"/>
</dbReference>
<dbReference type="EMBL" id="AK171610">
    <property type="protein sequence ID" value="BAE42561.1"/>
    <property type="molecule type" value="mRNA"/>
</dbReference>
<dbReference type="EMBL" id="AK173014">
    <property type="protein sequence ID" value="BAD32292.1"/>
    <property type="status" value="ALT_INIT"/>
    <property type="molecule type" value="mRNA"/>
</dbReference>
<dbReference type="EMBL" id="BC030388">
    <property type="protein sequence ID" value="AAH30388.1"/>
    <property type="molecule type" value="mRNA"/>
</dbReference>
<dbReference type="CCDS" id="CCDS37214.1">
    <molecule id="Q8JZR6-1"/>
</dbReference>
<dbReference type="CCDS" id="CCDS84193.1">
    <molecule id="Q8JZR6-2"/>
</dbReference>
<dbReference type="RefSeq" id="NP_001334031.1">
    <molecule id="Q8JZR6-2"/>
    <property type="nucleotide sequence ID" value="NM_001347102.1"/>
</dbReference>
<dbReference type="RefSeq" id="NP_067505.2">
    <molecule id="Q8JZR6-1"/>
    <property type="nucleotide sequence ID" value="NM_021530.2"/>
</dbReference>
<dbReference type="RefSeq" id="XP_017172207.1">
    <molecule id="Q8JZR6-2"/>
    <property type="nucleotide sequence ID" value="XM_017316718.2"/>
</dbReference>
<dbReference type="SMR" id="Q8JZR6"/>
<dbReference type="BioGRID" id="208500">
    <property type="interactions" value="5"/>
</dbReference>
<dbReference type="FunCoup" id="Q8JZR6">
    <property type="interactions" value="1047"/>
</dbReference>
<dbReference type="IntAct" id="Q8JZR6">
    <property type="interactions" value="1"/>
</dbReference>
<dbReference type="STRING" id="10090.ENSMUSP00000023776"/>
<dbReference type="GlyGen" id="Q8JZR6">
    <property type="glycosylation" value="3 sites, 1 N-linked glycan (1 site), 1 O-linked glycan (2 sites)"/>
</dbReference>
<dbReference type="iPTMnet" id="Q8JZR6"/>
<dbReference type="PhosphoSitePlus" id="Q8JZR6"/>
<dbReference type="jPOST" id="Q8JZR6"/>
<dbReference type="PaxDb" id="10090-ENSMUSP00000023776"/>
<dbReference type="PeptideAtlas" id="Q8JZR6"/>
<dbReference type="ProteomicsDB" id="256826">
    <molecule id="Q8JZR6-1"/>
</dbReference>
<dbReference type="ProteomicsDB" id="256827">
    <molecule id="Q8JZR6-2"/>
</dbReference>
<dbReference type="Pumba" id="Q8JZR6"/>
<dbReference type="Antibodypedia" id="26410">
    <property type="antibodies" value="172 antibodies from 26 providers"/>
</dbReference>
<dbReference type="DNASU" id="59033"/>
<dbReference type="Ensembl" id="ENSMUST00000023776.13">
    <molecule id="Q8JZR6-1"/>
    <property type="protein sequence ID" value="ENSMUSP00000023776.7"/>
    <property type="gene ID" value="ENSMUSG00000023032.13"/>
</dbReference>
<dbReference type="Ensembl" id="ENSMUST00000162049.2">
    <molecule id="Q8JZR6-2"/>
    <property type="protein sequence ID" value="ENSMUSP00000125090.2"/>
    <property type="gene ID" value="ENSMUSG00000023032.13"/>
</dbReference>
<dbReference type="GeneID" id="59033"/>
<dbReference type="KEGG" id="mmu:59033"/>
<dbReference type="UCSC" id="uc007xse.1">
    <molecule id="Q8JZR6-1"/>
    <property type="organism name" value="mouse"/>
</dbReference>
<dbReference type="AGR" id="MGI:1928745"/>
<dbReference type="CTD" id="9498"/>
<dbReference type="MGI" id="MGI:1928745">
    <property type="gene designation" value="Slc4a8"/>
</dbReference>
<dbReference type="VEuPathDB" id="HostDB:ENSMUSG00000023032"/>
<dbReference type="eggNOG" id="KOG1172">
    <property type="taxonomic scope" value="Eukaryota"/>
</dbReference>
<dbReference type="GeneTree" id="ENSGT00940000157422"/>
<dbReference type="HOGENOM" id="CLU_002289_5_2_1"/>
<dbReference type="InParanoid" id="Q8JZR6"/>
<dbReference type="OMA" id="SIEEISX"/>
<dbReference type="OrthoDB" id="1735926at2759"/>
<dbReference type="PhylomeDB" id="Q8JZR6"/>
<dbReference type="TreeFam" id="TF313630"/>
<dbReference type="Reactome" id="R-MMU-425381">
    <property type="pathway name" value="Bicarbonate transporters"/>
</dbReference>
<dbReference type="BioGRID-ORCS" id="59033">
    <property type="hits" value="2 hits in 77 CRISPR screens"/>
</dbReference>
<dbReference type="ChiTaRS" id="Slc4a8">
    <property type="organism name" value="mouse"/>
</dbReference>
<dbReference type="PRO" id="PR:Q8JZR6"/>
<dbReference type="Proteomes" id="UP000000589">
    <property type="component" value="Chromosome 15"/>
</dbReference>
<dbReference type="RNAct" id="Q8JZR6">
    <property type="molecule type" value="protein"/>
</dbReference>
<dbReference type="Bgee" id="ENSMUSG00000023032">
    <property type="expression patterns" value="Expressed in spermatocyte and 135 other cell types or tissues"/>
</dbReference>
<dbReference type="ExpressionAtlas" id="Q8JZR6">
    <property type="expression patterns" value="baseline and differential"/>
</dbReference>
<dbReference type="GO" id="GO:0016324">
    <property type="term" value="C:apical plasma membrane"/>
    <property type="evidence" value="ECO:0007669"/>
    <property type="project" value="UniProtKB-SubCell"/>
</dbReference>
<dbReference type="GO" id="GO:0032279">
    <property type="term" value="C:asymmetric synapse"/>
    <property type="evidence" value="ECO:0007669"/>
    <property type="project" value="Ensembl"/>
</dbReference>
<dbReference type="GO" id="GO:0016323">
    <property type="term" value="C:basolateral plasma membrane"/>
    <property type="evidence" value="ECO:0000314"/>
    <property type="project" value="UniProtKB"/>
</dbReference>
<dbReference type="GO" id="GO:0030425">
    <property type="term" value="C:dendrite"/>
    <property type="evidence" value="ECO:0007669"/>
    <property type="project" value="Ensembl"/>
</dbReference>
<dbReference type="GO" id="GO:0097386">
    <property type="term" value="C:glial cell projection"/>
    <property type="evidence" value="ECO:0007669"/>
    <property type="project" value="Ensembl"/>
</dbReference>
<dbReference type="GO" id="GO:0098978">
    <property type="term" value="C:glutamatergic synapse"/>
    <property type="evidence" value="ECO:0000314"/>
    <property type="project" value="ARUK-UCL"/>
</dbReference>
<dbReference type="GO" id="GO:0097457">
    <property type="term" value="C:hippocampal mossy fiber"/>
    <property type="evidence" value="ECO:0007669"/>
    <property type="project" value="Ensembl"/>
</dbReference>
<dbReference type="GO" id="GO:0016020">
    <property type="term" value="C:membrane"/>
    <property type="evidence" value="ECO:0000314"/>
    <property type="project" value="MGI"/>
</dbReference>
<dbReference type="GO" id="GO:0043005">
    <property type="term" value="C:neuron projection"/>
    <property type="evidence" value="ECO:0000314"/>
    <property type="project" value="MGI"/>
</dbReference>
<dbReference type="GO" id="GO:0032809">
    <property type="term" value="C:neuronal cell body membrane"/>
    <property type="evidence" value="ECO:0000314"/>
    <property type="project" value="MGI"/>
</dbReference>
<dbReference type="GO" id="GO:0005886">
    <property type="term" value="C:plasma membrane"/>
    <property type="evidence" value="ECO:0000314"/>
    <property type="project" value="MGI"/>
</dbReference>
<dbReference type="GO" id="GO:0098793">
    <property type="term" value="C:presynapse"/>
    <property type="evidence" value="ECO:0000314"/>
    <property type="project" value="ARUK-UCL"/>
</dbReference>
<dbReference type="GO" id="GO:0042734">
    <property type="term" value="C:presynaptic membrane"/>
    <property type="evidence" value="ECO:0000314"/>
    <property type="project" value="ARUK-UCL"/>
</dbReference>
<dbReference type="GO" id="GO:0032280">
    <property type="term" value="C:symmetric synapse"/>
    <property type="evidence" value="ECO:0007669"/>
    <property type="project" value="Ensembl"/>
</dbReference>
<dbReference type="GO" id="GO:0030672">
    <property type="term" value="C:synaptic vesicle membrane"/>
    <property type="evidence" value="ECO:0007669"/>
    <property type="project" value="UniProtKB-SubCell"/>
</dbReference>
<dbReference type="GO" id="GO:0043195">
    <property type="term" value="C:terminal bouton"/>
    <property type="evidence" value="ECO:0007669"/>
    <property type="project" value="Ensembl"/>
</dbReference>
<dbReference type="GO" id="GO:0022853">
    <property type="term" value="F:active monoatomic ion transmembrane transporter activity"/>
    <property type="evidence" value="ECO:0007669"/>
    <property type="project" value="UniProtKB-ARBA"/>
</dbReference>
<dbReference type="GO" id="GO:0042802">
    <property type="term" value="F:identical protein binding"/>
    <property type="evidence" value="ECO:0007669"/>
    <property type="project" value="Ensembl"/>
</dbReference>
<dbReference type="GO" id="GO:0140892">
    <property type="term" value="F:sodium,bicarbonate:chloride antiporter activity"/>
    <property type="evidence" value="ECO:0000314"/>
    <property type="project" value="UniProtKB"/>
</dbReference>
<dbReference type="GO" id="GO:0008510">
    <property type="term" value="F:sodium:bicarbonate symporter activity"/>
    <property type="evidence" value="ECO:0007669"/>
    <property type="project" value="Ensembl"/>
</dbReference>
<dbReference type="GO" id="GO:0110010">
    <property type="term" value="P:basolateral protein secretion"/>
    <property type="evidence" value="ECO:0007669"/>
    <property type="project" value="Ensembl"/>
</dbReference>
<dbReference type="GO" id="GO:0050804">
    <property type="term" value="P:modulation of chemical synaptic transmission"/>
    <property type="evidence" value="ECO:0000315"/>
    <property type="project" value="ARUK-UCL"/>
</dbReference>
<dbReference type="GO" id="GO:2000302">
    <property type="term" value="P:positive regulation of synaptic vesicle exocytosis"/>
    <property type="evidence" value="ECO:0000315"/>
    <property type="project" value="ARUK-UCL"/>
</dbReference>
<dbReference type="GO" id="GO:0051453">
    <property type="term" value="P:regulation of intracellular pH"/>
    <property type="evidence" value="ECO:0000315"/>
    <property type="project" value="ARUK-UCL"/>
</dbReference>
<dbReference type="GO" id="GO:0042391">
    <property type="term" value="P:regulation of membrane potential"/>
    <property type="evidence" value="ECO:0007669"/>
    <property type="project" value="Ensembl"/>
</dbReference>
<dbReference type="GO" id="GO:2000300">
    <property type="term" value="P:regulation of synaptic vesicle exocytosis"/>
    <property type="evidence" value="ECO:0000314"/>
    <property type="project" value="SynGO"/>
</dbReference>
<dbReference type="FunFam" id="1.10.287.570:FF:000001">
    <property type="entry name" value="Anion exchange protein"/>
    <property type="match status" value="1"/>
</dbReference>
<dbReference type="FunFam" id="3.40.930.10:FF:000001">
    <property type="entry name" value="Anion exchange protein"/>
    <property type="match status" value="1"/>
</dbReference>
<dbReference type="Gene3D" id="1.10.287.570">
    <property type="entry name" value="Helical hairpin bin"/>
    <property type="match status" value="1"/>
</dbReference>
<dbReference type="Gene3D" id="3.40.930.10">
    <property type="entry name" value="Mannitol-specific EII, Chain A"/>
    <property type="match status" value="1"/>
</dbReference>
<dbReference type="InterPro" id="IPR013769">
    <property type="entry name" value="Band3_cytoplasmic_dom"/>
</dbReference>
<dbReference type="InterPro" id="IPR011531">
    <property type="entry name" value="HCO3_transpt-like_TM_dom"/>
</dbReference>
<dbReference type="InterPro" id="IPR003020">
    <property type="entry name" value="HCO3_transpt_euk"/>
</dbReference>
<dbReference type="InterPro" id="IPR003024">
    <property type="entry name" value="Na/HCO3_transpt"/>
</dbReference>
<dbReference type="InterPro" id="IPR016152">
    <property type="entry name" value="PTrfase/Anion_transptr"/>
</dbReference>
<dbReference type="NCBIfam" id="TIGR00834">
    <property type="entry name" value="ae"/>
    <property type="match status" value="1"/>
</dbReference>
<dbReference type="PANTHER" id="PTHR11453">
    <property type="entry name" value="ANION EXCHANGE PROTEIN"/>
    <property type="match status" value="1"/>
</dbReference>
<dbReference type="PANTHER" id="PTHR11453:SF37">
    <property type="entry name" value="ELECTRONEUTRAL SODIUM BICARBONATE EXCHANGER 1"/>
    <property type="match status" value="1"/>
</dbReference>
<dbReference type="Pfam" id="PF07565">
    <property type="entry name" value="Band_3_cyto"/>
    <property type="match status" value="1"/>
</dbReference>
<dbReference type="Pfam" id="PF00955">
    <property type="entry name" value="HCO3_cotransp"/>
    <property type="match status" value="1"/>
</dbReference>
<dbReference type="PRINTS" id="PR01231">
    <property type="entry name" value="HCO3TRNSPORT"/>
</dbReference>
<dbReference type="PRINTS" id="PR01232">
    <property type="entry name" value="NAHCO3TRSPRT"/>
</dbReference>
<dbReference type="SUPFAM" id="SSF55804">
    <property type="entry name" value="Phoshotransferase/anion transport protein"/>
    <property type="match status" value="1"/>
</dbReference>
<feature type="chain" id="PRO_0000328923" description="Electroneutral sodium bicarbonate exchanger 1">
    <location>
        <begin position="1"/>
        <end position="1089"/>
    </location>
</feature>
<feature type="topological domain" description="Extracellular" evidence="3">
    <location>
        <begin position="1"/>
        <end position="476"/>
    </location>
</feature>
<feature type="transmembrane region" description="Helical" evidence="3">
    <location>
        <begin position="477"/>
        <end position="497"/>
    </location>
</feature>
<feature type="topological domain" description="Cytoplasmic" evidence="3">
    <location>
        <begin position="498"/>
        <end position="505"/>
    </location>
</feature>
<feature type="transmembrane region" description="Helical" evidence="3">
    <location>
        <begin position="506"/>
        <end position="526"/>
    </location>
</feature>
<feature type="topological domain" description="Extracellular" evidence="3">
    <location>
        <begin position="527"/>
        <end position="563"/>
    </location>
</feature>
<feature type="transmembrane region" description="Helical" evidence="3">
    <location>
        <begin position="564"/>
        <end position="584"/>
    </location>
</feature>
<feature type="topological domain" description="Cytoplasmic" evidence="3">
    <location>
        <begin position="585"/>
        <end position="593"/>
    </location>
</feature>
<feature type="transmembrane region" description="Helical" evidence="3">
    <location>
        <begin position="594"/>
        <end position="614"/>
    </location>
</feature>
<feature type="topological domain" description="Extracellular" evidence="3">
    <location>
        <begin position="615"/>
        <end position="685"/>
    </location>
</feature>
<feature type="transmembrane region" description="Helical" evidence="3">
    <location>
        <begin position="686"/>
        <end position="706"/>
    </location>
</feature>
<feature type="topological domain" description="Cytoplasmic" evidence="3">
    <location>
        <begin position="707"/>
        <end position="729"/>
    </location>
</feature>
<feature type="transmembrane region" description="Helical" evidence="3">
    <location>
        <begin position="730"/>
        <end position="750"/>
    </location>
</feature>
<feature type="topological domain" description="Extracellular" evidence="3">
    <location>
        <begin position="751"/>
        <end position="776"/>
    </location>
</feature>
<feature type="transmembrane region" description="Helical" evidence="3">
    <location>
        <begin position="777"/>
        <end position="797"/>
    </location>
</feature>
<feature type="topological domain" description="Cytoplasmic" evidence="3">
    <location>
        <begin position="798"/>
        <end position="822"/>
    </location>
</feature>
<feature type="transmembrane region" description="Helical" evidence="3">
    <location>
        <begin position="823"/>
        <end position="843"/>
    </location>
</feature>
<feature type="topological domain" description="Extracellular" evidence="3">
    <location>
        <begin position="844"/>
        <end position="879"/>
    </location>
</feature>
<feature type="transmembrane region" description="Helical" evidence="3">
    <location>
        <begin position="880"/>
        <end position="900"/>
    </location>
</feature>
<feature type="topological domain" description="Cytoplasmic" evidence="3">
    <location>
        <begin position="901"/>
        <end position="902"/>
    </location>
</feature>
<feature type="transmembrane region" description="Helical" evidence="3">
    <location>
        <begin position="903"/>
        <end position="923"/>
    </location>
</feature>
<feature type="topological domain" description="Extracellular" evidence="3">
    <location>
        <begin position="924"/>
        <end position="960"/>
    </location>
</feature>
<feature type="transmembrane region" description="Helical" evidence="3">
    <location>
        <begin position="961"/>
        <end position="981"/>
    </location>
</feature>
<feature type="topological domain" description="Cytoplasmic" evidence="3">
    <location>
        <begin position="982"/>
        <end position="1089"/>
    </location>
</feature>
<feature type="region of interest" description="Disordered" evidence="4">
    <location>
        <begin position="55"/>
        <end position="90"/>
    </location>
</feature>
<feature type="compositionally biased region" description="Basic residues" evidence="4">
    <location>
        <begin position="58"/>
        <end position="76"/>
    </location>
</feature>
<feature type="glycosylation site" description="N-linked (GlcNAc) asparagine" evidence="2">
    <location>
        <position position="644"/>
    </location>
</feature>
<feature type="disulfide bond" evidence="2">
    <location>
        <begin position="634"/>
        <end position="682"/>
    </location>
</feature>
<feature type="disulfide bond" evidence="2">
    <location>
        <begin position="636"/>
        <end position="670"/>
    </location>
</feature>
<feature type="splice variant" id="VSP_052769" description="In isoform 2." evidence="12">
    <location>
        <begin position="1"/>
        <end position="52"/>
    </location>
</feature>
<feature type="sequence conflict" description="In Ref. 2; BAE42561." evidence="14" ref="2">
    <original>K</original>
    <variation>E</variation>
    <location>
        <position position="219"/>
    </location>
</feature>
<feature type="sequence conflict" description="In Ref. 1; AAF61705." evidence="14" ref="1">
    <original>V</original>
    <variation>M</variation>
    <location>
        <position position="258"/>
    </location>
</feature>
<feature type="sequence conflict" description="In Ref. 2; BAE42561." evidence="14" ref="2">
    <original>K</original>
    <variation>R</variation>
    <location>
        <position position="291"/>
    </location>
</feature>
<feature type="sequence conflict" description="In Ref. 2; BAC30341." evidence="14" ref="2">
    <original>N</original>
    <variation>S</variation>
    <location>
        <position position="644"/>
    </location>
</feature>
<feature type="sequence conflict" description="In Ref. 1; AAF61705." evidence="14" ref="1">
    <original>S</original>
    <variation>P</variation>
    <location>
        <position position="707"/>
    </location>
</feature>
<feature type="sequence conflict" description="In Ref. 2; BAE42561." evidence="14" ref="2">
    <original>K</original>
    <variation>E</variation>
    <location>
        <position position="949"/>
    </location>
</feature>
<feature type="sequence conflict" description="In Ref. 2; BAC30341." evidence="14" ref="2">
    <original>D</original>
    <variation>G</variation>
    <location>
        <position position="1015"/>
    </location>
</feature>
<gene>
    <name evidence="16 19" type="primary">Slc4a8</name>
    <name type="synonym">Kiaa0739</name>
    <name evidence="13" type="synonym">Ndcbe</name>
</gene>
<proteinExistence type="evidence at protein level"/>
<name>S4A8_MOUSE</name>
<reference evidence="14 15" key="1">
    <citation type="journal article" date="2001" name="Kidney Int.">
        <title>Mouse Na+: HCO3- cotransporter isoform NBC-3 (kNBC-3): cloning, expression, and renal distribution.</title>
        <authorList>
            <person name="Wang Z."/>
            <person name="Conforti L."/>
            <person name="Petrovic S."/>
            <person name="Amlal H."/>
            <person name="Burnham C.E."/>
            <person name="Soleimani M."/>
        </authorList>
    </citation>
    <scope>NUCLEOTIDE SEQUENCE [MRNA] (ISOFORM 1)</scope>
    <scope>TISSUE SPECIFICITY</scope>
    <source>
        <tissue evidence="15">Kidney inner medulla</tissue>
    </source>
</reference>
<reference evidence="14 17" key="2">
    <citation type="journal article" date="2005" name="Science">
        <title>The transcriptional landscape of the mammalian genome.</title>
        <authorList>
            <person name="Carninci P."/>
            <person name="Kasukawa T."/>
            <person name="Katayama S."/>
            <person name="Gough J."/>
            <person name="Frith M.C."/>
            <person name="Maeda N."/>
            <person name="Oyama R."/>
            <person name="Ravasi T."/>
            <person name="Lenhard B."/>
            <person name="Wells C."/>
            <person name="Kodzius R."/>
            <person name="Shimokawa K."/>
            <person name="Bajic V.B."/>
            <person name="Brenner S.E."/>
            <person name="Batalov S."/>
            <person name="Forrest A.R."/>
            <person name="Zavolan M."/>
            <person name="Davis M.J."/>
            <person name="Wilming L.G."/>
            <person name="Aidinis V."/>
            <person name="Allen J.E."/>
            <person name="Ambesi-Impiombato A."/>
            <person name="Apweiler R."/>
            <person name="Aturaliya R.N."/>
            <person name="Bailey T.L."/>
            <person name="Bansal M."/>
            <person name="Baxter L."/>
            <person name="Beisel K.W."/>
            <person name="Bersano T."/>
            <person name="Bono H."/>
            <person name="Chalk A.M."/>
            <person name="Chiu K.P."/>
            <person name="Choudhary V."/>
            <person name="Christoffels A."/>
            <person name="Clutterbuck D.R."/>
            <person name="Crowe M.L."/>
            <person name="Dalla E."/>
            <person name="Dalrymple B.P."/>
            <person name="de Bono B."/>
            <person name="Della Gatta G."/>
            <person name="di Bernardo D."/>
            <person name="Down T."/>
            <person name="Engstrom P."/>
            <person name="Fagiolini M."/>
            <person name="Faulkner G."/>
            <person name="Fletcher C.F."/>
            <person name="Fukushima T."/>
            <person name="Furuno M."/>
            <person name="Futaki S."/>
            <person name="Gariboldi M."/>
            <person name="Georgii-Hemming P."/>
            <person name="Gingeras T.R."/>
            <person name="Gojobori T."/>
            <person name="Green R.E."/>
            <person name="Gustincich S."/>
            <person name="Harbers M."/>
            <person name="Hayashi Y."/>
            <person name="Hensch T.K."/>
            <person name="Hirokawa N."/>
            <person name="Hill D."/>
            <person name="Huminiecki L."/>
            <person name="Iacono M."/>
            <person name="Ikeo K."/>
            <person name="Iwama A."/>
            <person name="Ishikawa T."/>
            <person name="Jakt M."/>
            <person name="Kanapin A."/>
            <person name="Katoh M."/>
            <person name="Kawasawa Y."/>
            <person name="Kelso J."/>
            <person name="Kitamura H."/>
            <person name="Kitano H."/>
            <person name="Kollias G."/>
            <person name="Krishnan S.P."/>
            <person name="Kruger A."/>
            <person name="Kummerfeld S.K."/>
            <person name="Kurochkin I.V."/>
            <person name="Lareau L.F."/>
            <person name="Lazarevic D."/>
            <person name="Lipovich L."/>
            <person name="Liu J."/>
            <person name="Liuni S."/>
            <person name="McWilliam S."/>
            <person name="Madan Babu M."/>
            <person name="Madera M."/>
            <person name="Marchionni L."/>
            <person name="Matsuda H."/>
            <person name="Matsuzawa S."/>
            <person name="Miki H."/>
            <person name="Mignone F."/>
            <person name="Miyake S."/>
            <person name="Morris K."/>
            <person name="Mottagui-Tabar S."/>
            <person name="Mulder N."/>
            <person name="Nakano N."/>
            <person name="Nakauchi H."/>
            <person name="Ng P."/>
            <person name="Nilsson R."/>
            <person name="Nishiguchi S."/>
            <person name="Nishikawa S."/>
            <person name="Nori F."/>
            <person name="Ohara O."/>
            <person name="Okazaki Y."/>
            <person name="Orlando V."/>
            <person name="Pang K.C."/>
            <person name="Pavan W.J."/>
            <person name="Pavesi G."/>
            <person name="Pesole G."/>
            <person name="Petrovsky N."/>
            <person name="Piazza S."/>
            <person name="Reed J."/>
            <person name="Reid J.F."/>
            <person name="Ring B.Z."/>
            <person name="Ringwald M."/>
            <person name="Rost B."/>
            <person name="Ruan Y."/>
            <person name="Salzberg S.L."/>
            <person name="Sandelin A."/>
            <person name="Schneider C."/>
            <person name="Schoenbach C."/>
            <person name="Sekiguchi K."/>
            <person name="Semple C.A."/>
            <person name="Seno S."/>
            <person name="Sessa L."/>
            <person name="Sheng Y."/>
            <person name="Shibata Y."/>
            <person name="Shimada H."/>
            <person name="Shimada K."/>
            <person name="Silva D."/>
            <person name="Sinclair B."/>
            <person name="Sperling S."/>
            <person name="Stupka E."/>
            <person name="Sugiura K."/>
            <person name="Sultana R."/>
            <person name="Takenaka Y."/>
            <person name="Taki K."/>
            <person name="Tammoja K."/>
            <person name="Tan S.L."/>
            <person name="Tang S."/>
            <person name="Taylor M.S."/>
            <person name="Tegner J."/>
            <person name="Teichmann S.A."/>
            <person name="Ueda H.R."/>
            <person name="van Nimwegen E."/>
            <person name="Verardo R."/>
            <person name="Wei C.L."/>
            <person name="Yagi K."/>
            <person name="Yamanishi H."/>
            <person name="Zabarovsky E."/>
            <person name="Zhu S."/>
            <person name="Zimmer A."/>
            <person name="Hide W."/>
            <person name="Bult C."/>
            <person name="Grimmond S.M."/>
            <person name="Teasdale R.D."/>
            <person name="Liu E.T."/>
            <person name="Brusic V."/>
            <person name="Quackenbush J."/>
            <person name="Wahlestedt C."/>
            <person name="Mattick J.S."/>
            <person name="Hume D.A."/>
            <person name="Kai C."/>
            <person name="Sasaki D."/>
            <person name="Tomaru Y."/>
            <person name="Fukuda S."/>
            <person name="Kanamori-Katayama M."/>
            <person name="Suzuki M."/>
            <person name="Aoki J."/>
            <person name="Arakawa T."/>
            <person name="Iida J."/>
            <person name="Imamura K."/>
            <person name="Itoh M."/>
            <person name="Kato T."/>
            <person name="Kawaji H."/>
            <person name="Kawagashira N."/>
            <person name="Kawashima T."/>
            <person name="Kojima M."/>
            <person name="Kondo S."/>
            <person name="Konno H."/>
            <person name="Nakano K."/>
            <person name="Ninomiya N."/>
            <person name="Nishio T."/>
            <person name="Okada M."/>
            <person name="Plessy C."/>
            <person name="Shibata K."/>
            <person name="Shiraki T."/>
            <person name="Suzuki S."/>
            <person name="Tagami M."/>
            <person name="Waki K."/>
            <person name="Watahiki A."/>
            <person name="Okamura-Oho Y."/>
            <person name="Suzuki H."/>
            <person name="Kawai J."/>
            <person name="Hayashizaki Y."/>
        </authorList>
    </citation>
    <scope>NUCLEOTIDE SEQUENCE [LARGE SCALE MRNA] (ISOFORMS 1 AND 2)</scope>
    <source>
        <strain evidence="17">C57BL/6J</strain>
        <tissue evidence="7">Dendritic cell</tissue>
        <tissue evidence="17">Spinal cord</tissue>
    </source>
</reference>
<reference evidence="14 18" key="3">
    <citation type="journal article" date="2004" name="DNA Res.">
        <title>Prediction of the coding sequences of mouse homologues of KIAA gene: IV. The complete nucleotide sequences of 500 mouse KIAA-homologous cDNAs identified by screening of terminal sequences of cDNA clones randomly sampled from size-fractionated libraries.</title>
        <authorList>
            <person name="Okazaki N."/>
            <person name="Kikuno R."/>
            <person name="Ohara R."/>
            <person name="Inamoto S."/>
            <person name="Koseki H."/>
            <person name="Hiraoka S."/>
            <person name="Saga Y."/>
            <person name="Seino S."/>
            <person name="Nishimura M."/>
            <person name="Kaisho T."/>
            <person name="Hoshino K."/>
            <person name="Kitamura H."/>
            <person name="Nagase T."/>
            <person name="Ohara O."/>
            <person name="Koga H."/>
        </authorList>
    </citation>
    <scope>NUCLEOTIDE SEQUENCE [LARGE SCALE MRNA] (ISOFORM 1)</scope>
    <source>
        <tissue evidence="18">Fetal brain</tissue>
    </source>
</reference>
<reference evidence="14 16" key="4">
    <citation type="journal article" date="2004" name="Genome Res.">
        <title>The status, quality, and expansion of the NIH full-length cDNA project: the Mammalian Gene Collection (MGC).</title>
        <authorList>
            <consortium name="The MGC Project Team"/>
        </authorList>
    </citation>
    <scope>NUCLEOTIDE SEQUENCE [LARGE SCALE MRNA] (ISOFORM 1)</scope>
    <source>
        <strain evidence="6">C57BL/6J</strain>
        <tissue evidence="16">Retina</tissue>
    </source>
</reference>
<reference key="5">
    <citation type="journal article" date="2008" name="Neuroscience">
        <title>Expression and localization of Na-driven Cl-HCO(3)(-) exchanger (SLC4A8) in rodent CNS.</title>
        <authorList>
            <person name="Chen L.M."/>
            <person name="Kelly M.L."/>
            <person name="Parker M.D."/>
            <person name="Bouyer P."/>
            <person name="Gill H.S."/>
            <person name="Felie J.M."/>
            <person name="Davis B.A."/>
            <person name="Boron W.F."/>
        </authorList>
    </citation>
    <scope>SUBCELLULAR LOCATION</scope>
    <scope>TISSUE SPECIFICITY</scope>
</reference>
<reference key="6">
    <citation type="journal article" date="2010" name="J. Clin. Invest.">
        <title>The Na+-dependent chloride-bicarbonate exchanger SLC4A8 mediates an electroneutral Na+ reabsorption process in the renal cortical collecting ducts of mice.</title>
        <authorList>
            <person name="Leviel F."/>
            <person name="Huebner C.A."/>
            <person name="Houillier P."/>
            <person name="Morla L."/>
            <person name="El Moghrabi S."/>
            <person name="Brideau G."/>
            <person name="Hassan H."/>
            <person name="Hatim H."/>
            <person name="Parker M.D."/>
            <person name="Kurth I."/>
            <person name="Kougioumtzes A."/>
            <person name="Sinning A."/>
            <person name="Pech V."/>
            <person name="Riemondy K.A."/>
            <person name="Miller R.L."/>
            <person name="Hummler E."/>
            <person name="Shull G.E."/>
            <person name="Aronson P.S."/>
            <person name="Doucet A."/>
            <person name="Wall S.M."/>
            <person name="Chambrey R."/>
            <person name="Eladari D."/>
        </authorList>
    </citation>
    <scope>FUNCTION</scope>
    <scope>TRANSPORTER ACTIVITY</scope>
    <scope>TISSUE SPECIFICITY</scope>
</reference>
<reference key="7">
    <citation type="journal article" date="2011" name="J. Neurosci.">
        <title>Synaptic glutamate release is modulated by the Na+ -driven Cl-/HCO(3)- exchanger Slc4a8.</title>
        <authorList>
            <person name="Sinning A."/>
            <person name="Liebmann L."/>
            <person name="Kougioumtzes A."/>
            <person name="Westermann M."/>
            <person name="Bruehl C."/>
            <person name="Huebner C.A."/>
        </authorList>
    </citation>
    <scope>FUNCTION</scope>
    <scope>SUBCELLULAR LOCATION</scope>
    <scope>TISSUE SPECIFICITY</scope>
</reference>
<reference key="8">
    <citation type="journal article" date="2018" name="Cell. Physiol. Biochem.">
        <title>Slc4a8 in the Kidney: Expression, Subcellular Localization and Role in Salt Reabsorption.</title>
        <authorList>
            <person name="Xu J."/>
            <person name="Barone S."/>
            <person name="Zahedi K."/>
            <person name="Brooks M."/>
            <person name="Soleimani M."/>
        </authorList>
    </citation>
    <scope>SUBCELLULAR LOCATION</scope>
    <scope>TISSUE SPECIFICITY</scope>
</reference>
<comment type="function">
    <text evidence="9 10">Mediates electroneutral sodium- and carbonate-dependent chloride-HCO3(-) exchange with a Na(+):HCO3(-) stoichiometry of 2:1 (PubMed:20389022). Plays a major role in pH regulation in neurons (PubMed:21593314). Mediates sodium reabsorption in the renal cortical collecting ducts (PubMed:20389022).</text>
</comment>
<comment type="catalytic activity">
    <reaction evidence="9">
        <text>2 hydrogencarbonate(out) + chloride(in) + Na(+)(out) = 2 hydrogencarbonate(in) + chloride(out) + Na(+)(in)</text>
        <dbReference type="Rhea" id="RHEA:72739"/>
        <dbReference type="ChEBI" id="CHEBI:17544"/>
        <dbReference type="ChEBI" id="CHEBI:17996"/>
        <dbReference type="ChEBI" id="CHEBI:29101"/>
    </reaction>
</comment>
<comment type="subunit">
    <text evidence="2">Homodimer.</text>
</comment>
<comment type="subcellular location">
    <subcellularLocation>
        <location evidence="8 10">Cell membrane</location>
        <topology evidence="3">Multi-pass membrane protein</topology>
    </subcellularLocation>
    <subcellularLocation>
        <location evidence="1">Apical cell membrane</location>
        <topology evidence="3">Multi-pass membrane protein</topology>
    </subcellularLocation>
    <subcellularLocation>
        <location evidence="11">Basolateral cell membrane</location>
        <topology>Multi-pass membrane protein</topology>
    </subcellularLocation>
    <subcellularLocation>
        <location evidence="2">Cytoplasmic vesicle</location>
        <location evidence="2">Secretory vesicle</location>
        <location evidence="2">Synaptic vesicle membrane</location>
        <topology evidence="3">Multi-pass membrane protein</topology>
    </subcellularLocation>
    <text evidence="10">Localizes to synaptic junction cell membrane.</text>
</comment>
<comment type="alternative products">
    <event type="alternative splicing"/>
    <isoform>
        <id>Q8JZR6-1</id>
        <name evidence="5 6 7">1</name>
        <sequence type="displayed"/>
    </isoform>
    <isoform>
        <id>Q8JZR6-2</id>
        <name evidence="7">2</name>
        <sequence type="described" ref="VSP_052769"/>
    </isoform>
</comment>
<comment type="tissue specificity">
    <text evidence="5 8 9 10 11">Expressed in the hippocampal neurons (at protein level). Highly expressed in brain with lower levels in lung, kidney and heart. In the kidney, there is high expression in the inner medulla, localized to the inner medullary collecting duct. In the brain, there seems to be three transcripts each having a different expression pattern. The smaller 3kb transcript has highest expression levels in the thalamus and the largest 9.5kb transcript has highest levels in the substantia nigra. The middle transcript of 4.4kb, which is also the main transcript in kidney, is highly expressed in thalamus. Hence, the highest levels are observed in the thalamus, amygdala and caudate nucleus and very low expression was seen in the corpus callosum.</text>
</comment>
<comment type="similarity">
    <text evidence="3">Belongs to the anion exchanger (TC 2.A.31) family.</text>
</comment>
<comment type="sequence caution" evidence="14">
    <conflict type="erroneous initiation">
        <sequence resource="EMBL-CDS" id="BAD32292"/>
    </conflict>
    <text>Extended N-terminus.</text>
</comment>
<evidence type="ECO:0000250" key="1">
    <source>
        <dbReference type="UniProtKB" id="Q2Y0W8"/>
    </source>
</evidence>
<evidence type="ECO:0000250" key="2">
    <source>
        <dbReference type="UniProtKB" id="Q6RVG2"/>
    </source>
</evidence>
<evidence type="ECO:0000255" key="3"/>
<evidence type="ECO:0000256" key="4">
    <source>
        <dbReference type="SAM" id="MobiDB-lite"/>
    </source>
</evidence>
<evidence type="ECO:0000269" key="5">
    <source>
    </source>
</evidence>
<evidence type="ECO:0000269" key="6">
    <source>
    </source>
</evidence>
<evidence type="ECO:0000269" key="7">
    <source>
    </source>
</evidence>
<evidence type="ECO:0000269" key="8">
    <source>
    </source>
</evidence>
<evidence type="ECO:0000269" key="9">
    <source>
    </source>
</evidence>
<evidence type="ECO:0000269" key="10">
    <source>
    </source>
</evidence>
<evidence type="ECO:0000269" key="11">
    <source>
    </source>
</evidence>
<evidence type="ECO:0000303" key="12">
    <source>
    </source>
</evidence>
<evidence type="ECO:0000303" key="13">
    <source>
    </source>
</evidence>
<evidence type="ECO:0000305" key="14"/>
<evidence type="ECO:0000312" key="15">
    <source>
        <dbReference type="EMBL" id="AAF61705.1"/>
    </source>
</evidence>
<evidence type="ECO:0000312" key="16">
    <source>
        <dbReference type="EMBL" id="AAH30388.1"/>
    </source>
</evidence>
<evidence type="ECO:0000312" key="17">
    <source>
        <dbReference type="EMBL" id="BAC30341.1"/>
    </source>
</evidence>
<evidence type="ECO:0000312" key="18">
    <source>
        <dbReference type="EMBL" id="BAD32292.1"/>
    </source>
</evidence>
<evidence type="ECO:0000312" key="19">
    <source>
        <dbReference type="MGI" id="MGI:1928745"/>
    </source>
</evidence>
<sequence length="1089" mass="122421">MPAGSNEPDGVLSYQRPDEEAVVDQGGTSTILNIHYEKEELEGHRTLYVGVRMPLGRQSHRHHRTHGQKHRRRGGRGKGASQGEEGLEALAHDTPSQRVQFILGTEEDEEHVPHELFTELDEICMKEGEDAEWKETARWLKFEEDVEDGGERWSKPYVATLSLHSLFELRSCLINGSVLLDMRASSIEEISDLILDQQELLRDLSDSVRVKVREALLKKHHHQNERRRNNLIPIVRSFAEVGKKQSDPHSMDRDGQTVSPQSATNLEVKNGVNCEHSPVDLSKVDLHFMKKIPTGAEASNVLVGEVDTLDRPIVAFVRLSPAVLLSGLTEVPIPTRFLFILLGPVGKGQQYHEIGRSMATIMTDEIFHDVAYKAKERDDLLAGIDEFLDQVTVLPPGEWDPSIRIEPPKNVPSQEKRKMPGVPNGNVCHIEPEPHGGHSGPELERTGRLFGGLVLDVKRKAPWYWSDYRDALSLQCLASFLFLYCACMSPVITFGGLLGEATEGRISAIESLFGASMTGIAYSLFAGQPLTILGSTGPVLVFEKILFKFCKDYALSYLSLRALIGLWTAFLCIVLVATDASSLVCYITRFTEEAFASLICIIFIYEAIEKLIHLAETYPIHMHSQLDHLSLYYCRCVLPENPNNHTLQYWKDHNILAAEVNWANLTVSECQEMHGEFMGSACGHHGPYTPDVLFWSCILFFATFIVSSTLKTFKTSRYFPTRVRSMVSDFAVFLTIFTMVVLDFLIGVPSPKLQVPNVFKPTRDDRGWFINPIGPNPWWTVIAAIIPALLCTILIFMDQQITAVIINRKEHKLKKGCGYHLDLLMVAVMLGVCSIMGLPWFVAATVLSITHVNSLKLESECSAPGEQPKFLGIREQRVTGLMIFVLMGCSVFMTAVLKFIPMPVLYGVFLYMGVSSLQGIQFFDRLKLFGMPAKHQPDFIYLRHVPLRKVHLFTLVQLTCLVLLWVIKASPAAIVFPMMVLALVFVRKVMDLCFSKRELSWLDDLMPESKKKKLDDAKKKEEEEAEKMLDIGGDKFPLESRKLLSSPGKSSSFRCDPSEINISDEMPKTTVWKALSINSGNTKEKSPFN</sequence>
<keyword id="KW-0025">Alternative splicing</keyword>
<keyword id="KW-0039">Anion exchange</keyword>
<keyword id="KW-0050">Antiport</keyword>
<keyword id="KW-1003">Cell membrane</keyword>
<keyword id="KW-0968">Cytoplasmic vesicle</keyword>
<keyword id="KW-1015">Disulfide bond</keyword>
<keyword id="KW-0325">Glycoprotein</keyword>
<keyword id="KW-0406">Ion transport</keyword>
<keyword id="KW-0472">Membrane</keyword>
<keyword id="KW-1185">Reference proteome</keyword>
<keyword id="KW-0915">Sodium</keyword>
<keyword id="KW-0739">Sodium transport</keyword>
<keyword id="KW-0770">Synapse</keyword>
<keyword id="KW-0812">Transmembrane</keyword>
<keyword id="KW-1133">Transmembrane helix</keyword>
<keyword id="KW-0813">Transport</keyword>